<gene>
    <name evidence="1" type="primary">valS</name>
    <name type="ordered locus">BMA0927</name>
</gene>
<name>SYV_BURMA</name>
<keyword id="KW-0030">Aminoacyl-tRNA synthetase</keyword>
<keyword id="KW-0067">ATP-binding</keyword>
<keyword id="KW-0175">Coiled coil</keyword>
<keyword id="KW-0963">Cytoplasm</keyword>
<keyword id="KW-0436">Ligase</keyword>
<keyword id="KW-0547">Nucleotide-binding</keyword>
<keyword id="KW-0648">Protein biosynthesis</keyword>
<keyword id="KW-1185">Reference proteome</keyword>
<sequence>MSDTTLAKSFEPQTIESQWGPEWEKRGYATPALDPSRPDFSIQLPPPNVTGTLHMGHAFNQTIMDGLVRYHRMLGHNTLWVPGTDHAGIATQIVVERQLDAQGVSRHDLGREKFVERVWEWKERSGSTITGQVRRIGASPDWSREYFTMNDKMSEAVREVFVRLYEQGLIYRGKRLVNWDPVLLTAVSDLEVVSEEENGHLWHIRYPLADGSGHLSVATTRPETMLGDVAVMVHPEDERYRHLVGRHVKLPLCEREIPIIADDYVDREFGTGVVKVTPAHDFNDYQVGLRHALAPIEILTLDAKINDNAPAAYRGLDRFDARKAIVDELDAQGLLESVKPHKLMVPRGDRTGVVIEPMLTDQWFVAMTKPAPQGTFHPGKSITEVSLEVVRRGEIKFVPENWTTTYYQWLENIQDWCISRQLWWGHQIPAWYGENGEIFVARNEEDARAQAAAKGYTGALKRDDDVLDTWFSSALVPFSSLGWPNETPEMKHFLPSSVLVTGFDIIFFWVARMVMMTTHFTGKVPFGTVYVHGLVRDAEGQKMSKSKGNTLDPIDIVDGIGLDALVAKRTTGLMNPRQAATIEKKTRKEFPDGIPAFGTDALRFTMASMATLGRNVNFDLARCEGYRNFCNKLWNATRFVLMNCEGHDCGFDKPEVCGAGDCGPGGYLDFSPADRWIVSLMQRVEADIAKGFADYRFDNIANAIYKFVWDEYCDWYLELAKVQIQNGTSEQQRATRRTLLRVLETVLRLAHPIIPFITEALWQKVAPLAGRYPAGKAEGEASLMVQAYPVAEPKKLDEACEQWAAELKAVVDACRNLRGEMNLSPATKVPLLAAGDAAQLQAFAPYVQALARLSEVRVLPDEAALDADAHGAPIAIVGGNKLVLKVEIDVAAERERLSKEIARLEGEIVKCNAKLGNEAFVAKAPPAVVAQEQKRLAEFQSTLTKLGAQLARLPA</sequence>
<accession>Q62KW5</accession>
<evidence type="ECO:0000255" key="1">
    <source>
        <dbReference type="HAMAP-Rule" id="MF_02004"/>
    </source>
</evidence>
<organism>
    <name type="scientific">Burkholderia mallei (strain ATCC 23344)</name>
    <dbReference type="NCBI Taxonomy" id="243160"/>
    <lineage>
        <taxon>Bacteria</taxon>
        <taxon>Pseudomonadati</taxon>
        <taxon>Pseudomonadota</taxon>
        <taxon>Betaproteobacteria</taxon>
        <taxon>Burkholderiales</taxon>
        <taxon>Burkholderiaceae</taxon>
        <taxon>Burkholderia</taxon>
        <taxon>pseudomallei group</taxon>
    </lineage>
</organism>
<feature type="chain" id="PRO_0000224452" description="Valine--tRNA ligase">
    <location>
        <begin position="1"/>
        <end position="955"/>
    </location>
</feature>
<feature type="coiled-coil region" evidence="1">
    <location>
        <begin position="887"/>
        <end position="953"/>
    </location>
</feature>
<feature type="short sequence motif" description="'HIGH' region">
    <location>
        <begin position="47"/>
        <end position="57"/>
    </location>
</feature>
<feature type="short sequence motif" description="'KMSKS' region">
    <location>
        <begin position="542"/>
        <end position="546"/>
    </location>
</feature>
<feature type="binding site" evidence="1">
    <location>
        <position position="545"/>
    </location>
    <ligand>
        <name>ATP</name>
        <dbReference type="ChEBI" id="CHEBI:30616"/>
    </ligand>
</feature>
<protein>
    <recommendedName>
        <fullName evidence="1">Valine--tRNA ligase</fullName>
        <ecNumber evidence="1">6.1.1.9</ecNumber>
    </recommendedName>
    <alternativeName>
        <fullName evidence="1">Valyl-tRNA synthetase</fullName>
        <shortName evidence="1">ValRS</shortName>
    </alternativeName>
</protein>
<comment type="function">
    <text evidence="1">Catalyzes the attachment of valine to tRNA(Val). As ValRS can inadvertently accommodate and process structurally similar amino acids such as threonine, to avoid such errors, it has a 'posttransfer' editing activity that hydrolyzes mischarged Thr-tRNA(Val) in a tRNA-dependent manner.</text>
</comment>
<comment type="catalytic activity">
    <reaction evidence="1">
        <text>tRNA(Val) + L-valine + ATP = L-valyl-tRNA(Val) + AMP + diphosphate</text>
        <dbReference type="Rhea" id="RHEA:10704"/>
        <dbReference type="Rhea" id="RHEA-COMP:9672"/>
        <dbReference type="Rhea" id="RHEA-COMP:9708"/>
        <dbReference type="ChEBI" id="CHEBI:30616"/>
        <dbReference type="ChEBI" id="CHEBI:33019"/>
        <dbReference type="ChEBI" id="CHEBI:57762"/>
        <dbReference type="ChEBI" id="CHEBI:78442"/>
        <dbReference type="ChEBI" id="CHEBI:78537"/>
        <dbReference type="ChEBI" id="CHEBI:456215"/>
        <dbReference type="EC" id="6.1.1.9"/>
    </reaction>
</comment>
<comment type="subunit">
    <text evidence="1">Monomer.</text>
</comment>
<comment type="subcellular location">
    <subcellularLocation>
        <location evidence="1">Cytoplasm</location>
    </subcellularLocation>
</comment>
<comment type="domain">
    <text evidence="1">ValRS has two distinct active sites: one for aminoacylation and one for editing. The misactivated threonine is translocated from the active site to the editing site.</text>
</comment>
<comment type="domain">
    <text evidence="1">The C-terminal coiled-coil domain is crucial for aminoacylation activity.</text>
</comment>
<comment type="similarity">
    <text evidence="1">Belongs to the class-I aminoacyl-tRNA synthetase family. ValS type 1 subfamily.</text>
</comment>
<proteinExistence type="inferred from homology"/>
<dbReference type="EC" id="6.1.1.9" evidence="1"/>
<dbReference type="EMBL" id="CP000010">
    <property type="protein sequence ID" value="AAU49461.1"/>
    <property type="molecule type" value="Genomic_DNA"/>
</dbReference>
<dbReference type="RefSeq" id="WP_004191922.1">
    <property type="nucleotide sequence ID" value="NC_006348.1"/>
</dbReference>
<dbReference type="RefSeq" id="YP_102654.1">
    <property type="nucleotide sequence ID" value="NC_006348.1"/>
</dbReference>
<dbReference type="SMR" id="Q62KW5"/>
<dbReference type="KEGG" id="bma:BMA0927"/>
<dbReference type="PATRIC" id="fig|243160.12.peg.960"/>
<dbReference type="eggNOG" id="COG0525">
    <property type="taxonomic scope" value="Bacteria"/>
</dbReference>
<dbReference type="HOGENOM" id="CLU_001493_0_2_4"/>
<dbReference type="Proteomes" id="UP000006693">
    <property type="component" value="Chromosome 1"/>
</dbReference>
<dbReference type="GO" id="GO:0005829">
    <property type="term" value="C:cytosol"/>
    <property type="evidence" value="ECO:0007669"/>
    <property type="project" value="TreeGrafter"/>
</dbReference>
<dbReference type="GO" id="GO:0002161">
    <property type="term" value="F:aminoacyl-tRNA deacylase activity"/>
    <property type="evidence" value="ECO:0007669"/>
    <property type="project" value="InterPro"/>
</dbReference>
<dbReference type="GO" id="GO:0005524">
    <property type="term" value="F:ATP binding"/>
    <property type="evidence" value="ECO:0007669"/>
    <property type="project" value="UniProtKB-UniRule"/>
</dbReference>
<dbReference type="GO" id="GO:0004832">
    <property type="term" value="F:valine-tRNA ligase activity"/>
    <property type="evidence" value="ECO:0007669"/>
    <property type="project" value="UniProtKB-UniRule"/>
</dbReference>
<dbReference type="GO" id="GO:0006438">
    <property type="term" value="P:valyl-tRNA aminoacylation"/>
    <property type="evidence" value="ECO:0007669"/>
    <property type="project" value="UniProtKB-UniRule"/>
</dbReference>
<dbReference type="CDD" id="cd07962">
    <property type="entry name" value="Anticodon_Ia_Val"/>
    <property type="match status" value="1"/>
</dbReference>
<dbReference type="CDD" id="cd00817">
    <property type="entry name" value="ValRS_core"/>
    <property type="match status" value="1"/>
</dbReference>
<dbReference type="FunFam" id="1.10.287.380:FF:000001">
    <property type="entry name" value="Valine--tRNA ligase"/>
    <property type="match status" value="1"/>
</dbReference>
<dbReference type="FunFam" id="3.40.50.620:FF:000020">
    <property type="entry name" value="Valine--tRNA ligase, mitochondrial"/>
    <property type="match status" value="1"/>
</dbReference>
<dbReference type="FunFam" id="3.40.50.620:FF:000078">
    <property type="entry name" value="Valine--tRNA ligase, mitochondrial"/>
    <property type="match status" value="1"/>
</dbReference>
<dbReference type="FunFam" id="3.90.740.10:FF:000005">
    <property type="entry name" value="Valine--tRNA ligase, mitochondrial"/>
    <property type="match status" value="1"/>
</dbReference>
<dbReference type="Gene3D" id="3.40.50.620">
    <property type="entry name" value="HUPs"/>
    <property type="match status" value="2"/>
</dbReference>
<dbReference type="Gene3D" id="1.10.730.10">
    <property type="entry name" value="Isoleucyl-tRNA Synthetase, Domain 1"/>
    <property type="match status" value="1"/>
</dbReference>
<dbReference type="Gene3D" id="1.10.287.380">
    <property type="entry name" value="Valyl-tRNA synthetase, C-terminal domain"/>
    <property type="match status" value="1"/>
</dbReference>
<dbReference type="Gene3D" id="3.90.740.10">
    <property type="entry name" value="Valyl/Leucyl/Isoleucyl-tRNA synthetase, editing domain"/>
    <property type="match status" value="1"/>
</dbReference>
<dbReference type="HAMAP" id="MF_02004">
    <property type="entry name" value="Val_tRNA_synth_type1"/>
    <property type="match status" value="1"/>
</dbReference>
<dbReference type="InterPro" id="IPR001412">
    <property type="entry name" value="aa-tRNA-synth_I_CS"/>
</dbReference>
<dbReference type="InterPro" id="IPR002300">
    <property type="entry name" value="aa-tRNA-synth_Ia"/>
</dbReference>
<dbReference type="InterPro" id="IPR033705">
    <property type="entry name" value="Anticodon_Ia_Val"/>
</dbReference>
<dbReference type="InterPro" id="IPR013155">
    <property type="entry name" value="M/V/L/I-tRNA-synth_anticd-bd"/>
</dbReference>
<dbReference type="InterPro" id="IPR014729">
    <property type="entry name" value="Rossmann-like_a/b/a_fold"/>
</dbReference>
<dbReference type="InterPro" id="IPR010978">
    <property type="entry name" value="tRNA-bd_arm"/>
</dbReference>
<dbReference type="InterPro" id="IPR009080">
    <property type="entry name" value="tRNAsynth_Ia_anticodon-bd"/>
</dbReference>
<dbReference type="InterPro" id="IPR037118">
    <property type="entry name" value="Val-tRNA_synth_C_sf"/>
</dbReference>
<dbReference type="InterPro" id="IPR019499">
    <property type="entry name" value="Val-tRNA_synth_tRNA-bd"/>
</dbReference>
<dbReference type="InterPro" id="IPR009008">
    <property type="entry name" value="Val/Leu/Ile-tRNA-synth_edit"/>
</dbReference>
<dbReference type="InterPro" id="IPR002303">
    <property type="entry name" value="Valyl-tRNA_ligase"/>
</dbReference>
<dbReference type="NCBIfam" id="NF004349">
    <property type="entry name" value="PRK05729.1"/>
    <property type="match status" value="1"/>
</dbReference>
<dbReference type="NCBIfam" id="TIGR00422">
    <property type="entry name" value="valS"/>
    <property type="match status" value="1"/>
</dbReference>
<dbReference type="PANTHER" id="PTHR11946:SF93">
    <property type="entry name" value="VALINE--TRNA LIGASE, CHLOROPLASTIC_MITOCHONDRIAL 2"/>
    <property type="match status" value="1"/>
</dbReference>
<dbReference type="PANTHER" id="PTHR11946">
    <property type="entry name" value="VALYL-TRNA SYNTHETASES"/>
    <property type="match status" value="1"/>
</dbReference>
<dbReference type="Pfam" id="PF08264">
    <property type="entry name" value="Anticodon_1"/>
    <property type="match status" value="1"/>
</dbReference>
<dbReference type="Pfam" id="PF00133">
    <property type="entry name" value="tRNA-synt_1"/>
    <property type="match status" value="1"/>
</dbReference>
<dbReference type="Pfam" id="PF10458">
    <property type="entry name" value="Val_tRNA-synt_C"/>
    <property type="match status" value="1"/>
</dbReference>
<dbReference type="PRINTS" id="PR00986">
    <property type="entry name" value="TRNASYNTHVAL"/>
</dbReference>
<dbReference type="SUPFAM" id="SSF47323">
    <property type="entry name" value="Anticodon-binding domain of a subclass of class I aminoacyl-tRNA synthetases"/>
    <property type="match status" value="1"/>
</dbReference>
<dbReference type="SUPFAM" id="SSF52374">
    <property type="entry name" value="Nucleotidylyl transferase"/>
    <property type="match status" value="1"/>
</dbReference>
<dbReference type="SUPFAM" id="SSF46589">
    <property type="entry name" value="tRNA-binding arm"/>
    <property type="match status" value="1"/>
</dbReference>
<dbReference type="SUPFAM" id="SSF50677">
    <property type="entry name" value="ValRS/IleRS/LeuRS editing domain"/>
    <property type="match status" value="1"/>
</dbReference>
<dbReference type="PROSITE" id="PS00178">
    <property type="entry name" value="AA_TRNA_LIGASE_I"/>
    <property type="match status" value="1"/>
</dbReference>
<reference key="1">
    <citation type="journal article" date="2004" name="Proc. Natl. Acad. Sci. U.S.A.">
        <title>Structural flexibility in the Burkholderia mallei genome.</title>
        <authorList>
            <person name="Nierman W.C."/>
            <person name="DeShazer D."/>
            <person name="Kim H.S."/>
            <person name="Tettelin H."/>
            <person name="Nelson K.E."/>
            <person name="Feldblyum T.V."/>
            <person name="Ulrich R.L."/>
            <person name="Ronning C.M."/>
            <person name="Brinkac L.M."/>
            <person name="Daugherty S.C."/>
            <person name="Davidsen T.D."/>
            <person name="DeBoy R.T."/>
            <person name="Dimitrov G."/>
            <person name="Dodson R.J."/>
            <person name="Durkin A.S."/>
            <person name="Gwinn M.L."/>
            <person name="Haft D.H."/>
            <person name="Khouri H.M."/>
            <person name="Kolonay J.F."/>
            <person name="Madupu R."/>
            <person name="Mohammoud Y."/>
            <person name="Nelson W.C."/>
            <person name="Radune D."/>
            <person name="Romero C.M."/>
            <person name="Sarria S."/>
            <person name="Selengut J."/>
            <person name="Shamblin C."/>
            <person name="Sullivan S.A."/>
            <person name="White O."/>
            <person name="Yu Y."/>
            <person name="Zafar N."/>
            <person name="Zhou L."/>
            <person name="Fraser C.M."/>
        </authorList>
    </citation>
    <scope>NUCLEOTIDE SEQUENCE [LARGE SCALE GENOMIC DNA]</scope>
    <source>
        <strain>ATCC 23344</strain>
    </source>
</reference>